<proteinExistence type="inferred from homology"/>
<comment type="function">
    <text evidence="2">Catalyzes the formation of N(7)-methylguanine at position 46 (m7G46) in tRNA.</text>
</comment>
<comment type="catalytic activity">
    <reaction evidence="2">
        <text>guanosine(46) in tRNA + S-adenosyl-L-methionine = N(7)-methylguanosine(46) in tRNA + S-adenosyl-L-homocysteine</text>
        <dbReference type="Rhea" id="RHEA:42708"/>
        <dbReference type="Rhea" id="RHEA-COMP:10188"/>
        <dbReference type="Rhea" id="RHEA-COMP:10189"/>
        <dbReference type="ChEBI" id="CHEBI:57856"/>
        <dbReference type="ChEBI" id="CHEBI:59789"/>
        <dbReference type="ChEBI" id="CHEBI:74269"/>
        <dbReference type="ChEBI" id="CHEBI:74480"/>
        <dbReference type="EC" id="2.1.1.33"/>
    </reaction>
</comment>
<comment type="pathway">
    <text evidence="2">tRNA modification; N(7)-methylguanine-tRNA biosynthesis.</text>
</comment>
<comment type="similarity">
    <text evidence="2">Belongs to the class I-like SAM-binding methyltransferase superfamily. TrmB family.</text>
</comment>
<accession>Q5WZ61</accession>
<feature type="chain" id="PRO_0000229170" description="tRNA (guanine-N(7)-)-methyltransferase">
    <location>
        <begin position="1"/>
        <end position="225"/>
    </location>
</feature>
<feature type="active site" evidence="1">
    <location>
        <position position="131"/>
    </location>
</feature>
<feature type="binding site" evidence="2">
    <location>
        <position position="56"/>
    </location>
    <ligand>
        <name>S-adenosyl-L-methionine</name>
        <dbReference type="ChEBI" id="CHEBI:59789"/>
    </ligand>
</feature>
<feature type="binding site" evidence="2">
    <location>
        <position position="81"/>
    </location>
    <ligand>
        <name>S-adenosyl-L-methionine</name>
        <dbReference type="ChEBI" id="CHEBI:59789"/>
    </ligand>
</feature>
<feature type="binding site" evidence="2">
    <location>
        <position position="108"/>
    </location>
    <ligand>
        <name>S-adenosyl-L-methionine</name>
        <dbReference type="ChEBI" id="CHEBI:59789"/>
    </ligand>
</feature>
<feature type="binding site" evidence="2">
    <location>
        <position position="131"/>
    </location>
    <ligand>
        <name>S-adenosyl-L-methionine</name>
        <dbReference type="ChEBI" id="CHEBI:59789"/>
    </ligand>
</feature>
<feature type="binding site" evidence="2">
    <location>
        <position position="135"/>
    </location>
    <ligand>
        <name>substrate</name>
    </ligand>
</feature>
<feature type="binding site" evidence="2">
    <location>
        <position position="167"/>
    </location>
    <ligand>
        <name>substrate</name>
    </ligand>
</feature>
<feature type="binding site" evidence="2">
    <location>
        <begin position="204"/>
        <end position="207"/>
    </location>
    <ligand>
        <name>substrate</name>
    </ligand>
</feature>
<sequence length="225" mass="25874">MQRKIKSYVLRAGRISNRQQQGLDLWLEDYELKFDSPSPWNFAKEFGRHDADTIVEIGFGMGTSLFAMAMNNPQCNYLGIEVHKAGVGSLVADLHEYQISNVRVVAHDAVEVLQTKIPENSLAGVQIFFPDPWHKKRHHKRRLIQSEFIQMLVKKIRPSGFIHCATDWEDYAEHILNVLSSESALFNQQKEGGYSPRPDSRPLTKFELRGERLGHGVWDLVFIKK</sequence>
<gene>
    <name evidence="2" type="primary">trmB</name>
    <name type="ordered locus">lpl0521</name>
</gene>
<organism>
    <name type="scientific">Legionella pneumophila (strain Lens)</name>
    <dbReference type="NCBI Taxonomy" id="297245"/>
    <lineage>
        <taxon>Bacteria</taxon>
        <taxon>Pseudomonadati</taxon>
        <taxon>Pseudomonadota</taxon>
        <taxon>Gammaproteobacteria</taxon>
        <taxon>Legionellales</taxon>
        <taxon>Legionellaceae</taxon>
        <taxon>Legionella</taxon>
    </lineage>
</organism>
<dbReference type="EC" id="2.1.1.33" evidence="2"/>
<dbReference type="EMBL" id="CR628337">
    <property type="protein sequence ID" value="CAH14751.1"/>
    <property type="molecule type" value="Genomic_DNA"/>
</dbReference>
<dbReference type="RefSeq" id="WP_011214724.1">
    <property type="nucleotide sequence ID" value="NC_006369.1"/>
</dbReference>
<dbReference type="SMR" id="Q5WZ61"/>
<dbReference type="KEGG" id="lpf:lpl0521"/>
<dbReference type="LegioList" id="lpl0521"/>
<dbReference type="HOGENOM" id="CLU_050910_0_1_6"/>
<dbReference type="UniPathway" id="UPA00989"/>
<dbReference type="Proteomes" id="UP000002517">
    <property type="component" value="Chromosome"/>
</dbReference>
<dbReference type="GO" id="GO:0043527">
    <property type="term" value="C:tRNA methyltransferase complex"/>
    <property type="evidence" value="ECO:0007669"/>
    <property type="project" value="TreeGrafter"/>
</dbReference>
<dbReference type="GO" id="GO:0008176">
    <property type="term" value="F:tRNA (guanine(46)-N7)-methyltransferase activity"/>
    <property type="evidence" value="ECO:0007669"/>
    <property type="project" value="UniProtKB-UniRule"/>
</dbReference>
<dbReference type="Gene3D" id="3.40.50.150">
    <property type="entry name" value="Vaccinia Virus protein VP39"/>
    <property type="match status" value="1"/>
</dbReference>
<dbReference type="HAMAP" id="MF_01057">
    <property type="entry name" value="tRNA_methyltr_TrmB"/>
    <property type="match status" value="1"/>
</dbReference>
<dbReference type="InterPro" id="IPR029063">
    <property type="entry name" value="SAM-dependent_MTases_sf"/>
</dbReference>
<dbReference type="InterPro" id="IPR003358">
    <property type="entry name" value="tRNA_(Gua-N-7)_MeTrfase_Trmb"/>
</dbReference>
<dbReference type="InterPro" id="IPR055361">
    <property type="entry name" value="tRNA_methyltr_TrmB_bact"/>
</dbReference>
<dbReference type="NCBIfam" id="TIGR00091">
    <property type="entry name" value="tRNA (guanosine(46)-N7)-methyltransferase TrmB"/>
    <property type="match status" value="1"/>
</dbReference>
<dbReference type="PANTHER" id="PTHR23417">
    <property type="entry name" value="3-DEOXY-D-MANNO-OCTULOSONIC-ACID TRANSFERASE/TRNA GUANINE-N 7 - -METHYLTRANSFERASE"/>
    <property type="match status" value="1"/>
</dbReference>
<dbReference type="PANTHER" id="PTHR23417:SF14">
    <property type="entry name" value="PENTACOTRIPEPTIDE-REPEAT REGION OF PRORP DOMAIN-CONTAINING PROTEIN"/>
    <property type="match status" value="1"/>
</dbReference>
<dbReference type="Pfam" id="PF02390">
    <property type="entry name" value="Methyltransf_4"/>
    <property type="match status" value="1"/>
</dbReference>
<dbReference type="SUPFAM" id="SSF53335">
    <property type="entry name" value="S-adenosyl-L-methionine-dependent methyltransferases"/>
    <property type="match status" value="1"/>
</dbReference>
<dbReference type="PROSITE" id="PS51625">
    <property type="entry name" value="SAM_MT_TRMB"/>
    <property type="match status" value="1"/>
</dbReference>
<protein>
    <recommendedName>
        <fullName evidence="2">tRNA (guanine-N(7)-)-methyltransferase</fullName>
        <ecNumber evidence="2">2.1.1.33</ecNumber>
    </recommendedName>
    <alternativeName>
        <fullName evidence="2">tRNA (guanine(46)-N(7))-methyltransferase</fullName>
    </alternativeName>
    <alternativeName>
        <fullName evidence="2">tRNA(m7G46)-methyltransferase</fullName>
    </alternativeName>
</protein>
<keyword id="KW-0489">Methyltransferase</keyword>
<keyword id="KW-0949">S-adenosyl-L-methionine</keyword>
<keyword id="KW-0808">Transferase</keyword>
<keyword id="KW-0819">tRNA processing</keyword>
<reference key="1">
    <citation type="journal article" date="2004" name="Nat. Genet.">
        <title>Evidence in the Legionella pneumophila genome for exploitation of host cell functions and high genome plasticity.</title>
        <authorList>
            <person name="Cazalet C."/>
            <person name="Rusniok C."/>
            <person name="Brueggemann H."/>
            <person name="Zidane N."/>
            <person name="Magnier A."/>
            <person name="Ma L."/>
            <person name="Tichit M."/>
            <person name="Jarraud S."/>
            <person name="Bouchier C."/>
            <person name="Vandenesch F."/>
            <person name="Kunst F."/>
            <person name="Etienne J."/>
            <person name="Glaser P."/>
            <person name="Buchrieser C."/>
        </authorList>
    </citation>
    <scope>NUCLEOTIDE SEQUENCE [LARGE SCALE GENOMIC DNA]</scope>
    <source>
        <strain>Lens</strain>
    </source>
</reference>
<evidence type="ECO:0000250" key="1"/>
<evidence type="ECO:0000255" key="2">
    <source>
        <dbReference type="HAMAP-Rule" id="MF_01057"/>
    </source>
</evidence>
<name>TRMB_LEGPL</name>